<dbReference type="SMR" id="P0C2P5"/>
<dbReference type="ArachnoServer" id="AS000425">
    <property type="toxin name" value="kappa-theraphotoxin-Gr4a"/>
</dbReference>
<dbReference type="GO" id="GO:0005576">
    <property type="term" value="C:extracellular region"/>
    <property type="evidence" value="ECO:0007669"/>
    <property type="project" value="UniProtKB-SubCell"/>
</dbReference>
<dbReference type="GO" id="GO:0008200">
    <property type="term" value="F:ion channel inhibitor activity"/>
    <property type="evidence" value="ECO:0007669"/>
    <property type="project" value="InterPro"/>
</dbReference>
<dbReference type="GO" id="GO:0015459">
    <property type="term" value="F:potassium channel regulator activity"/>
    <property type="evidence" value="ECO:0007669"/>
    <property type="project" value="UniProtKB-KW"/>
</dbReference>
<dbReference type="GO" id="GO:0090729">
    <property type="term" value="F:toxin activity"/>
    <property type="evidence" value="ECO:0007669"/>
    <property type="project" value="UniProtKB-KW"/>
</dbReference>
<dbReference type="InterPro" id="IPR011696">
    <property type="entry name" value="Huwentoxin-1"/>
</dbReference>
<dbReference type="InterPro" id="IPR013140">
    <property type="entry name" value="Huwentoxin_CS1"/>
</dbReference>
<dbReference type="Pfam" id="PF07740">
    <property type="entry name" value="Toxin_12"/>
    <property type="match status" value="1"/>
</dbReference>
<dbReference type="SUPFAM" id="SSF57059">
    <property type="entry name" value="omega toxin-like"/>
    <property type="match status" value="1"/>
</dbReference>
<dbReference type="PROSITE" id="PS60021">
    <property type="entry name" value="HWTX_1"/>
    <property type="match status" value="1"/>
</dbReference>
<name>VSTX3_GRARO</name>
<keyword id="KW-0903">Direct protein sequencing</keyword>
<keyword id="KW-1015">Disulfide bond</keyword>
<keyword id="KW-0872">Ion channel impairing toxin</keyword>
<keyword id="KW-0960">Knottin</keyword>
<keyword id="KW-0528">Neurotoxin</keyword>
<keyword id="KW-0632">Potassium channel impairing toxin</keyword>
<keyword id="KW-0964">Secreted</keyword>
<keyword id="KW-0800">Toxin</keyword>
<sequence>DCLGWFKGCDPDNDKCCEGYKCNRRDKWCKYKLW</sequence>
<protein>
    <recommendedName>
        <fullName evidence="5">Voltage sensor toxin 3</fullName>
        <shortName evidence="5">VSTX3</shortName>
    </recommendedName>
    <alternativeName>
        <fullName evidence="6">Beta/kappa-theraphotoxin-Gr4a</fullName>
        <shortName evidence="6">Beta/kappa-TRTX-Gr4a</shortName>
    </alternativeName>
</protein>
<evidence type="ECO:0000250" key="1"/>
<evidence type="ECO:0000250" key="2">
    <source>
        <dbReference type="UniProtKB" id="P0DL72"/>
    </source>
</evidence>
<evidence type="ECO:0000250" key="3">
    <source>
        <dbReference type="UniProtKB" id="P0DL74"/>
    </source>
</evidence>
<evidence type="ECO:0000269" key="4">
    <source>
    </source>
</evidence>
<evidence type="ECO:0000303" key="5">
    <source>
    </source>
</evidence>
<evidence type="ECO:0000305" key="6"/>
<evidence type="ECO:0000305" key="7">
    <source>
    </source>
</evidence>
<accession>P0C2P5</accession>
<feature type="peptide" id="PRO_0000283771" description="Voltage sensor toxin 3" evidence="4">
    <location>
        <begin position="1"/>
        <end position="34"/>
    </location>
</feature>
<feature type="disulfide bond" evidence="2">
    <location>
        <begin position="2"/>
        <end position="17"/>
    </location>
</feature>
<feature type="disulfide bond" evidence="2">
    <location>
        <begin position="9"/>
        <end position="22"/>
    </location>
</feature>
<feature type="disulfide bond" evidence="2">
    <location>
        <begin position="16"/>
        <end position="29"/>
    </location>
</feature>
<proteinExistence type="evidence at protein level"/>
<comment type="function">
    <text evidence="3 4">Potent voltage-gated sodium channel blocker (IC(50)=190 nM and 210 nM on human and rat Nav1.3/SCN3A respectively, 430 nM on human Nav1.7/SCN9A, 770 nM and 290 nM on human and rat Nav1.8/SCN10A, respectively) (By similarity). Binds the voltage-sensor domain of the potassium channel KvAP (from Aeropyrum pernix) and weakly inhibits this channel (PubMed:15287735).</text>
</comment>
<comment type="subcellular location">
    <subcellularLocation>
        <location evidence="4">Secreted</location>
    </subcellularLocation>
</comment>
<comment type="tissue specificity">
    <text evidence="7">Expressed by the venom gland.</text>
</comment>
<comment type="domain">
    <text evidence="1">The presence of a 'disulfide through disulfide knot' structurally defines this protein as a knottin.</text>
</comment>
<comment type="miscellaneous">
    <text evidence="3">Shows only a very weak inhibition on human Nav1.5/SCN5A.</text>
</comment>
<comment type="miscellaneous">
    <text evidence="6">The primary structure of the mature peptide is identical to that of VSTX3 from Paraphysa scrofa (AC P0DL74).</text>
</comment>
<comment type="similarity">
    <text evidence="6">Belongs to the neurotoxin 10 (Hwtx-1) family. 61 (VSTX3) subfamily.</text>
</comment>
<organism>
    <name type="scientific">Grammostola rosea</name>
    <name type="common">Chilean rose tarantula</name>
    <name type="synonym">Grammostola spatulata</name>
    <dbReference type="NCBI Taxonomy" id="432528"/>
    <lineage>
        <taxon>Eukaryota</taxon>
        <taxon>Metazoa</taxon>
        <taxon>Ecdysozoa</taxon>
        <taxon>Arthropoda</taxon>
        <taxon>Chelicerata</taxon>
        <taxon>Arachnida</taxon>
        <taxon>Araneae</taxon>
        <taxon>Mygalomorphae</taxon>
        <taxon>Theraphosidae</taxon>
        <taxon>Grammostola</taxon>
    </lineage>
</organism>
<reference key="1">
    <citation type="journal article" date="2004" name="Biochemistry">
        <title>Localization of the voltage-sensor toxin receptor on KvAP.</title>
        <authorList>
            <person name="Ruta V."/>
            <person name="MacKinnon R."/>
        </authorList>
    </citation>
    <scope>PROTEIN SEQUENCE</scope>
    <scope>FUNCTION</scope>
    <scope>SUBCELLULAR LOCATION</scope>
    <source>
        <tissue>Venom</tissue>
    </source>
</reference>